<sequence length="217" mass="24429">MLSILILAATAAGLVILLFQRLWTVLGPHHVTPRESLRLLIVAGSGGHTTEILRLVGSLSNAYSPRHYVIAESDEMSAKKIHSLEELSRAQNDSTTEYPKYHLHRIPRSREVRQSWLSSVFTTFYSMWFSFPLVLRIKPDLVLCNGPGTCVPICVSALLLGILGVKKVIIVYVESICRVETLSLSGKILRHLSDYFIVQWPTLKEKYPKSVYLGRIV</sequence>
<feature type="chain" id="PRO_0000265117" description="UDP-N-acetylglucosamine transferase subunit ALG14">
    <location>
        <begin position="1"/>
        <end position="217"/>
    </location>
</feature>
<feature type="topological domain" description="Lumenal" evidence="1">
    <location>
        <begin position="1"/>
        <end position="3"/>
    </location>
</feature>
<feature type="transmembrane region" description="Helical" evidence="3">
    <location>
        <begin position="4"/>
        <end position="26"/>
    </location>
</feature>
<feature type="topological domain" description="Cytoplasmic" evidence="1">
    <location>
        <begin position="27"/>
        <end position="217"/>
    </location>
</feature>
<protein>
    <recommendedName>
        <fullName evidence="2">UDP-N-acetylglucosamine transferase subunit ALG14</fullName>
    </recommendedName>
    <alternativeName>
        <fullName evidence="5">Asparagine-linked glycosylation 14 homolog</fullName>
    </alternativeName>
</protein>
<evidence type="ECO:0000250" key="1">
    <source>
        <dbReference type="UniProtKB" id="P38242"/>
    </source>
</evidence>
<evidence type="ECO:0000250" key="2">
    <source>
        <dbReference type="UniProtKB" id="Q96F25"/>
    </source>
</evidence>
<evidence type="ECO:0000255" key="3"/>
<evidence type="ECO:0000305" key="4"/>
<evidence type="ECO:0000312" key="5">
    <source>
        <dbReference type="MGI" id="MGI:1914039"/>
    </source>
</evidence>
<organism>
    <name type="scientific">Mus musculus</name>
    <name type="common">Mouse</name>
    <dbReference type="NCBI Taxonomy" id="10090"/>
    <lineage>
        <taxon>Eukaryota</taxon>
        <taxon>Metazoa</taxon>
        <taxon>Chordata</taxon>
        <taxon>Craniata</taxon>
        <taxon>Vertebrata</taxon>
        <taxon>Euteleostomi</taxon>
        <taxon>Mammalia</taxon>
        <taxon>Eutheria</taxon>
        <taxon>Euarchontoglires</taxon>
        <taxon>Glires</taxon>
        <taxon>Rodentia</taxon>
        <taxon>Myomorpha</taxon>
        <taxon>Muroidea</taxon>
        <taxon>Muridae</taxon>
        <taxon>Murinae</taxon>
        <taxon>Mus</taxon>
        <taxon>Mus</taxon>
    </lineage>
</organism>
<dbReference type="EMBL" id="AK011733">
    <property type="protein sequence ID" value="BAB27807.1"/>
    <property type="molecule type" value="mRNA"/>
</dbReference>
<dbReference type="EMBL" id="AK017354">
    <property type="protein sequence ID" value="BAC25513.1"/>
    <property type="molecule type" value="mRNA"/>
</dbReference>
<dbReference type="EMBL" id="BC002278">
    <property type="protein sequence ID" value="AAH02278.1"/>
    <property type="molecule type" value="mRNA"/>
</dbReference>
<dbReference type="CCDS" id="CCDS17801.1"/>
<dbReference type="RefSeq" id="NP_077140.1">
    <property type="nucleotide sequence ID" value="NM_024178.3"/>
</dbReference>
<dbReference type="SMR" id="Q9D081"/>
<dbReference type="BioGRID" id="211721">
    <property type="interactions" value="2"/>
</dbReference>
<dbReference type="FunCoup" id="Q9D081">
    <property type="interactions" value="593"/>
</dbReference>
<dbReference type="STRING" id="10090.ENSMUSP00000038387"/>
<dbReference type="CAZy" id="GT1">
    <property type="family name" value="Glycosyltransferase Family 1"/>
</dbReference>
<dbReference type="GlyGen" id="Q9D081">
    <property type="glycosylation" value="1 site"/>
</dbReference>
<dbReference type="iPTMnet" id="Q9D081"/>
<dbReference type="PhosphoSitePlus" id="Q9D081"/>
<dbReference type="PaxDb" id="10090-ENSMUSP00000038387"/>
<dbReference type="PeptideAtlas" id="Q9D081"/>
<dbReference type="ProteomicsDB" id="296193"/>
<dbReference type="Pumba" id="Q9D081"/>
<dbReference type="Antibodypedia" id="53384">
    <property type="antibodies" value="82 antibodies from 18 providers"/>
</dbReference>
<dbReference type="DNASU" id="66789"/>
<dbReference type="Ensembl" id="ENSMUST00000039442.12">
    <property type="protein sequence ID" value="ENSMUSP00000038387.8"/>
    <property type="gene ID" value="ENSMUSG00000039887.12"/>
</dbReference>
<dbReference type="GeneID" id="66789"/>
<dbReference type="KEGG" id="mmu:66789"/>
<dbReference type="UCSC" id="uc008rdx.1">
    <property type="organism name" value="mouse"/>
</dbReference>
<dbReference type="AGR" id="MGI:1914039"/>
<dbReference type="CTD" id="199857"/>
<dbReference type="MGI" id="MGI:1914039">
    <property type="gene designation" value="Alg14"/>
</dbReference>
<dbReference type="VEuPathDB" id="HostDB:ENSMUSG00000039887"/>
<dbReference type="eggNOG" id="KOG3339">
    <property type="taxonomic scope" value="Eukaryota"/>
</dbReference>
<dbReference type="GeneTree" id="ENSGT00390000002579"/>
<dbReference type="HOGENOM" id="CLU_064541_2_0_1"/>
<dbReference type="InParanoid" id="Q9D081"/>
<dbReference type="OMA" id="CRIVFIE"/>
<dbReference type="OrthoDB" id="17098at2759"/>
<dbReference type="PhylomeDB" id="Q9D081"/>
<dbReference type="TreeFam" id="TF105628"/>
<dbReference type="Reactome" id="R-MMU-446193">
    <property type="pathway name" value="Biosynthesis of the N-glycan precursor (dolichol lipid-linked oligosaccharide, LLO) and transfer to a nascent protein"/>
</dbReference>
<dbReference type="BioGRID-ORCS" id="66789">
    <property type="hits" value="23 hits in 78 CRISPR screens"/>
</dbReference>
<dbReference type="PRO" id="PR:Q9D081"/>
<dbReference type="Proteomes" id="UP000000589">
    <property type="component" value="Chromosome 3"/>
</dbReference>
<dbReference type="RNAct" id="Q9D081">
    <property type="molecule type" value="protein"/>
</dbReference>
<dbReference type="Bgee" id="ENSMUSG00000039887">
    <property type="expression patterns" value="Expressed in sciatic nerve and 243 other cell types or tissues"/>
</dbReference>
<dbReference type="ExpressionAtlas" id="Q9D081">
    <property type="expression patterns" value="baseline and differential"/>
</dbReference>
<dbReference type="GO" id="GO:0098554">
    <property type="term" value="C:cytoplasmic side of endoplasmic reticulum membrane"/>
    <property type="evidence" value="ECO:0000250"/>
    <property type="project" value="UniProtKB"/>
</dbReference>
<dbReference type="GO" id="GO:0043541">
    <property type="term" value="C:UDP-N-acetylglucosamine transferase complex"/>
    <property type="evidence" value="ECO:0000250"/>
    <property type="project" value="UniProtKB"/>
</dbReference>
<dbReference type="GO" id="GO:0043495">
    <property type="term" value="F:protein-membrane adaptor activity"/>
    <property type="evidence" value="ECO:0007669"/>
    <property type="project" value="Ensembl"/>
</dbReference>
<dbReference type="GO" id="GO:0006488">
    <property type="term" value="P:dolichol-linked oligosaccharide biosynthetic process"/>
    <property type="evidence" value="ECO:0000250"/>
    <property type="project" value="UniProtKB"/>
</dbReference>
<dbReference type="GO" id="GO:0006487">
    <property type="term" value="P:protein N-linked glycosylation"/>
    <property type="evidence" value="ECO:0000250"/>
    <property type="project" value="UniProtKB"/>
</dbReference>
<dbReference type="FunFam" id="3.40.50.2000:FF:000098">
    <property type="entry name" value="UDP-N-acetylglucosamine transferase subunit ALG14 homolog"/>
    <property type="match status" value="1"/>
</dbReference>
<dbReference type="Gene3D" id="3.40.50.2000">
    <property type="entry name" value="Glycogen Phosphorylase B"/>
    <property type="match status" value="1"/>
</dbReference>
<dbReference type="InterPro" id="IPR013969">
    <property type="entry name" value="Oligosacch_biosynth_Alg14"/>
</dbReference>
<dbReference type="PANTHER" id="PTHR12154">
    <property type="entry name" value="GLYCOSYL TRANSFERASE-RELATED"/>
    <property type="match status" value="1"/>
</dbReference>
<dbReference type="PANTHER" id="PTHR12154:SF4">
    <property type="entry name" value="UDP-N-ACETYLGLUCOSAMINE TRANSFERASE SUBUNIT ALG14 HOMOLOG"/>
    <property type="match status" value="1"/>
</dbReference>
<dbReference type="Pfam" id="PF08660">
    <property type="entry name" value="Alg14"/>
    <property type="match status" value="1"/>
</dbReference>
<dbReference type="SUPFAM" id="SSF53756">
    <property type="entry name" value="UDP-Glycosyltransferase/glycogen phosphorylase"/>
    <property type="match status" value="1"/>
</dbReference>
<gene>
    <name evidence="5" type="primary">Alg14</name>
</gene>
<proteinExistence type="evidence at protein level"/>
<comment type="function">
    <text evidence="2">Part of the UDP-N-acetylglucosamine transferase complex that operates in the biosynthetic pathway of dolichol-linked oligosaccharides, the glycan precursors employed in protein asparagine (N)-glycosylation. The assembly of dolichol-linked oligosaccharides begins on the cytosolic side of the endoplasmic reticulum membrane and finishes in its lumen. The sequential addition of sugars to dolichol pyrophosphate produces dolichol-linked oligosaccharides containing fourteen sugars, including two GlcNAcs, nine mannoses and three glucoses. Once assembled, the oligosaccharides are transferred from the lipid to nascent proteins by oligosaccharyltransferases. Functions as a protein-membrane adapter recruiting ALG13 at the cytoplasmic face of the endoplasmic reticulum, where the complex catalyzes the second step of dolichol pyrophosphate biosynthesis, transferring a beta1,4-linked N-acetylglucosamine (GlcNAc) from UDP-GlcNAc to GlcNAc-pyrophosphatedolichol (Gn-PDol) to produce N,N'-diacetylchitobiosyl diphosphodolichol. N,N'-diacetylchitobiosyl diphosphodolichol is a substrate for ALG1, the following enzyme in the biosynthetic pathway.</text>
</comment>
<comment type="subunit">
    <text evidence="2">Forms with ALG13 the active heterodimeric UDP-N-acetylglucosamine transferase complex.</text>
</comment>
<comment type="subcellular location">
    <subcellularLocation>
        <location evidence="2">Endoplasmic reticulum membrane</location>
        <topology evidence="3">Single-pass membrane protein</topology>
    </subcellularLocation>
</comment>
<comment type="similarity">
    <text evidence="4">Belongs to the ALG14 family.</text>
</comment>
<reference key="1">
    <citation type="journal article" date="2005" name="Science">
        <title>The transcriptional landscape of the mammalian genome.</title>
        <authorList>
            <person name="Carninci P."/>
            <person name="Kasukawa T."/>
            <person name="Katayama S."/>
            <person name="Gough J."/>
            <person name="Frith M.C."/>
            <person name="Maeda N."/>
            <person name="Oyama R."/>
            <person name="Ravasi T."/>
            <person name="Lenhard B."/>
            <person name="Wells C."/>
            <person name="Kodzius R."/>
            <person name="Shimokawa K."/>
            <person name="Bajic V.B."/>
            <person name="Brenner S.E."/>
            <person name="Batalov S."/>
            <person name="Forrest A.R."/>
            <person name="Zavolan M."/>
            <person name="Davis M.J."/>
            <person name="Wilming L.G."/>
            <person name="Aidinis V."/>
            <person name="Allen J.E."/>
            <person name="Ambesi-Impiombato A."/>
            <person name="Apweiler R."/>
            <person name="Aturaliya R.N."/>
            <person name="Bailey T.L."/>
            <person name="Bansal M."/>
            <person name="Baxter L."/>
            <person name="Beisel K.W."/>
            <person name="Bersano T."/>
            <person name="Bono H."/>
            <person name="Chalk A.M."/>
            <person name="Chiu K.P."/>
            <person name="Choudhary V."/>
            <person name="Christoffels A."/>
            <person name="Clutterbuck D.R."/>
            <person name="Crowe M.L."/>
            <person name="Dalla E."/>
            <person name="Dalrymple B.P."/>
            <person name="de Bono B."/>
            <person name="Della Gatta G."/>
            <person name="di Bernardo D."/>
            <person name="Down T."/>
            <person name="Engstrom P."/>
            <person name="Fagiolini M."/>
            <person name="Faulkner G."/>
            <person name="Fletcher C.F."/>
            <person name="Fukushima T."/>
            <person name="Furuno M."/>
            <person name="Futaki S."/>
            <person name="Gariboldi M."/>
            <person name="Georgii-Hemming P."/>
            <person name="Gingeras T.R."/>
            <person name="Gojobori T."/>
            <person name="Green R.E."/>
            <person name="Gustincich S."/>
            <person name="Harbers M."/>
            <person name="Hayashi Y."/>
            <person name="Hensch T.K."/>
            <person name="Hirokawa N."/>
            <person name="Hill D."/>
            <person name="Huminiecki L."/>
            <person name="Iacono M."/>
            <person name="Ikeo K."/>
            <person name="Iwama A."/>
            <person name="Ishikawa T."/>
            <person name="Jakt M."/>
            <person name="Kanapin A."/>
            <person name="Katoh M."/>
            <person name="Kawasawa Y."/>
            <person name="Kelso J."/>
            <person name="Kitamura H."/>
            <person name="Kitano H."/>
            <person name="Kollias G."/>
            <person name="Krishnan S.P."/>
            <person name="Kruger A."/>
            <person name="Kummerfeld S.K."/>
            <person name="Kurochkin I.V."/>
            <person name="Lareau L.F."/>
            <person name="Lazarevic D."/>
            <person name="Lipovich L."/>
            <person name="Liu J."/>
            <person name="Liuni S."/>
            <person name="McWilliam S."/>
            <person name="Madan Babu M."/>
            <person name="Madera M."/>
            <person name="Marchionni L."/>
            <person name="Matsuda H."/>
            <person name="Matsuzawa S."/>
            <person name="Miki H."/>
            <person name="Mignone F."/>
            <person name="Miyake S."/>
            <person name="Morris K."/>
            <person name="Mottagui-Tabar S."/>
            <person name="Mulder N."/>
            <person name="Nakano N."/>
            <person name="Nakauchi H."/>
            <person name="Ng P."/>
            <person name="Nilsson R."/>
            <person name="Nishiguchi S."/>
            <person name="Nishikawa S."/>
            <person name="Nori F."/>
            <person name="Ohara O."/>
            <person name="Okazaki Y."/>
            <person name="Orlando V."/>
            <person name="Pang K.C."/>
            <person name="Pavan W.J."/>
            <person name="Pavesi G."/>
            <person name="Pesole G."/>
            <person name="Petrovsky N."/>
            <person name="Piazza S."/>
            <person name="Reed J."/>
            <person name="Reid J.F."/>
            <person name="Ring B.Z."/>
            <person name="Ringwald M."/>
            <person name="Rost B."/>
            <person name="Ruan Y."/>
            <person name="Salzberg S.L."/>
            <person name="Sandelin A."/>
            <person name="Schneider C."/>
            <person name="Schoenbach C."/>
            <person name="Sekiguchi K."/>
            <person name="Semple C.A."/>
            <person name="Seno S."/>
            <person name="Sessa L."/>
            <person name="Sheng Y."/>
            <person name="Shibata Y."/>
            <person name="Shimada H."/>
            <person name="Shimada K."/>
            <person name="Silva D."/>
            <person name="Sinclair B."/>
            <person name="Sperling S."/>
            <person name="Stupka E."/>
            <person name="Sugiura K."/>
            <person name="Sultana R."/>
            <person name="Takenaka Y."/>
            <person name="Taki K."/>
            <person name="Tammoja K."/>
            <person name="Tan S.L."/>
            <person name="Tang S."/>
            <person name="Taylor M.S."/>
            <person name="Tegner J."/>
            <person name="Teichmann S.A."/>
            <person name="Ueda H.R."/>
            <person name="van Nimwegen E."/>
            <person name="Verardo R."/>
            <person name="Wei C.L."/>
            <person name="Yagi K."/>
            <person name="Yamanishi H."/>
            <person name="Zabarovsky E."/>
            <person name="Zhu S."/>
            <person name="Zimmer A."/>
            <person name="Hide W."/>
            <person name="Bult C."/>
            <person name="Grimmond S.M."/>
            <person name="Teasdale R.D."/>
            <person name="Liu E.T."/>
            <person name="Brusic V."/>
            <person name="Quackenbush J."/>
            <person name="Wahlestedt C."/>
            <person name="Mattick J.S."/>
            <person name="Hume D.A."/>
            <person name="Kai C."/>
            <person name="Sasaki D."/>
            <person name="Tomaru Y."/>
            <person name="Fukuda S."/>
            <person name="Kanamori-Katayama M."/>
            <person name="Suzuki M."/>
            <person name="Aoki J."/>
            <person name="Arakawa T."/>
            <person name="Iida J."/>
            <person name="Imamura K."/>
            <person name="Itoh M."/>
            <person name="Kato T."/>
            <person name="Kawaji H."/>
            <person name="Kawagashira N."/>
            <person name="Kawashima T."/>
            <person name="Kojima M."/>
            <person name="Kondo S."/>
            <person name="Konno H."/>
            <person name="Nakano K."/>
            <person name="Ninomiya N."/>
            <person name="Nishio T."/>
            <person name="Okada M."/>
            <person name="Plessy C."/>
            <person name="Shibata K."/>
            <person name="Shiraki T."/>
            <person name="Suzuki S."/>
            <person name="Tagami M."/>
            <person name="Waki K."/>
            <person name="Watahiki A."/>
            <person name="Okamura-Oho Y."/>
            <person name="Suzuki H."/>
            <person name="Kawai J."/>
            <person name="Hayashizaki Y."/>
        </authorList>
    </citation>
    <scope>NUCLEOTIDE SEQUENCE [LARGE SCALE MRNA]</scope>
    <source>
        <strain>C57BL/6J</strain>
        <tissue>Head</tissue>
    </source>
</reference>
<reference key="2">
    <citation type="journal article" date="2004" name="Genome Res.">
        <title>The status, quality, and expansion of the NIH full-length cDNA project: the Mammalian Gene Collection (MGC).</title>
        <authorList>
            <consortium name="The MGC Project Team"/>
        </authorList>
    </citation>
    <scope>NUCLEOTIDE SEQUENCE [LARGE SCALE MRNA]</scope>
    <source>
        <strain>C57BL/6J</strain>
        <strain>FVB/N</strain>
        <tissue>Mammary tumor</tissue>
    </source>
</reference>
<reference key="3">
    <citation type="journal article" date="2010" name="Cell">
        <title>A tissue-specific atlas of mouse protein phosphorylation and expression.</title>
        <authorList>
            <person name="Huttlin E.L."/>
            <person name="Jedrychowski M.P."/>
            <person name="Elias J.E."/>
            <person name="Goswami T."/>
            <person name="Rad R."/>
            <person name="Beausoleil S.A."/>
            <person name="Villen J."/>
            <person name="Haas W."/>
            <person name="Sowa M.E."/>
            <person name="Gygi S.P."/>
        </authorList>
    </citation>
    <scope>IDENTIFICATION BY MASS SPECTROMETRY [LARGE SCALE ANALYSIS]</scope>
    <source>
        <tissue>Kidney</tissue>
        <tissue>Pancreas</tissue>
    </source>
</reference>
<name>ALG14_MOUSE</name>
<accession>Q9D081</accession>
<accession>Q8CEP2</accession>
<keyword id="KW-0256">Endoplasmic reticulum</keyword>
<keyword id="KW-0472">Membrane</keyword>
<keyword id="KW-1185">Reference proteome</keyword>
<keyword id="KW-0812">Transmembrane</keyword>
<keyword id="KW-1133">Transmembrane helix</keyword>